<sequence>MATTPDAAFEALMNGVTSWDLPKEFTPSELLLIGEAAFPVMVNDKGQVLIAVSFYGQGRLVVVSHESYLMHAGLAPFLLNAVSWLCPSPGTPIEVHSSLASLVNILRGSGINALVQPEPGEALGVYCIDAYNDTLTKKLVQFVKRGGGLLIGGQAWNWASQHGSDKVLFSFPGNKVTSVAGVYFTDVYGDINRFKVSKKIPKIPLYIRCWEELRHDQDQLLDGISMLDVRTGGVPSQLLVHGSLAFPLGLDNSFLSCFLAAAHYGRGRVVLAAHEAMLCAPKMEPFLLNAIRWLSRGQEDNIGVNTRLKNLNSLLLKHGLKCSLESHLTDDMCVYCCAAYSDQEAKKIQEFVAEGGGLLIGGQSWWWASQNPGSSALGSFPGNVILNTFGLSILPRTVSPGCFPILHIDIRNYHFRGALSEFQAMLNHKEGNLEKRYSGKLGVDGAGFLQIPAQGVPAYLSVHRILRKILRQAGLPAVSKSNPVSSHSYEAAILQLATELAHSGSDCSQIAHNLSSQTCSSNLSSSEHPITVEINGTNPGDRDVWMSTGLYLLEGQSTEISVSEPAASAGLKVQIGCHTDDLTFAIKLFRAPVVTYQCCMNRTQRSVSCLWGGLLYIIVPKGCQLGPVSVTITNAVPAPYYKLGKTSLEEWKSCIQKNLGPWGELATDNVILTVPTASLKTLENPEPLLQLWDEMMQAVARLASQPFPFQRPERIVADVQLSAGWMHSGYPIMCHMESVQELVSLANIRSKGLWGPIHELGHNQQCRGWEFPPHTTEATCNLWSVYVHETVLGIPRAQAHPQLKPEEREKRIKEHLQKGAPLQNWNVWTALETYLQLQEVFGWEPFITLFAEYQTIFYIPEDNECKMNIWLKLFSEKVQKNLVPFFEAWGWPIQKDVAEDLACYPSWEDHPLRMYMGSE</sequence>
<name>TCAF2_MOUSE</name>
<dbReference type="EMBL" id="AK131169">
    <property type="protein sequence ID" value="BAD21419.1"/>
    <property type="status" value="ALT_INIT"/>
    <property type="molecule type" value="mRNA"/>
</dbReference>
<dbReference type="EMBL" id="BC008555">
    <property type="protein sequence ID" value="AAH08555.1"/>
    <property type="molecule type" value="mRNA"/>
</dbReference>
<dbReference type="EMBL" id="BC011487">
    <property type="protein sequence ID" value="AAH11487.1"/>
    <property type="molecule type" value="mRNA"/>
</dbReference>
<dbReference type="CCDS" id="CCDS20075.1"/>
<dbReference type="RefSeq" id="NP_666286.1">
    <property type="nucleotide sequence ID" value="NM_146174.1"/>
</dbReference>
<dbReference type="BioGRID" id="231291">
    <property type="interactions" value="1"/>
</dbReference>
<dbReference type="FunCoup" id="Q921K8">
    <property type="interactions" value="170"/>
</dbReference>
<dbReference type="STRING" id="10090.ENSMUSP00000031879"/>
<dbReference type="MEROPS" id="M98.A03"/>
<dbReference type="iPTMnet" id="Q921K8"/>
<dbReference type="PhosphoSitePlus" id="Q921K8"/>
<dbReference type="PaxDb" id="10090-ENSMUSP00000031879"/>
<dbReference type="PeptideAtlas" id="Q921K8"/>
<dbReference type="ProteomicsDB" id="254674"/>
<dbReference type="Pumba" id="Q921K8"/>
<dbReference type="Ensembl" id="ENSMUST00000031879.5">
    <property type="protein sequence ID" value="ENSMUSP00000031879.4"/>
    <property type="gene ID" value="ENSMUSG00000029851.6"/>
</dbReference>
<dbReference type="GeneID" id="232748"/>
<dbReference type="KEGG" id="mmu:232748"/>
<dbReference type="UCSC" id="uc009brn.1">
    <property type="organism name" value="mouse"/>
</dbReference>
<dbReference type="AGR" id="MGI:2385258"/>
<dbReference type="CTD" id="285966"/>
<dbReference type="MGI" id="MGI:2385258">
    <property type="gene designation" value="Tcaf2"/>
</dbReference>
<dbReference type="VEuPathDB" id="HostDB:ENSMUSG00000029851"/>
<dbReference type="eggNOG" id="ENOG502S2AP">
    <property type="taxonomic scope" value="Eukaryota"/>
</dbReference>
<dbReference type="GeneTree" id="ENSGT00390000017365"/>
<dbReference type="HOGENOM" id="CLU_011215_0_0_1"/>
<dbReference type="InParanoid" id="Q921K8"/>
<dbReference type="OMA" id="SCEATML"/>
<dbReference type="OrthoDB" id="10260387at2759"/>
<dbReference type="PhylomeDB" id="Q921K8"/>
<dbReference type="TreeFam" id="TF331520"/>
<dbReference type="BioGRID-ORCS" id="232748">
    <property type="hits" value="2 hits in 76 CRISPR screens"/>
</dbReference>
<dbReference type="ChiTaRS" id="Tcaf2">
    <property type="organism name" value="mouse"/>
</dbReference>
<dbReference type="PRO" id="PR:Q921K8"/>
<dbReference type="Proteomes" id="UP000000589">
    <property type="component" value="Chromosome 6"/>
</dbReference>
<dbReference type="RNAct" id="Q921K8">
    <property type="molecule type" value="protein"/>
</dbReference>
<dbReference type="Bgee" id="ENSMUSG00000029851">
    <property type="expression patterns" value="Expressed in parotid gland and 163 other cell types or tissues"/>
</dbReference>
<dbReference type="GO" id="GO:0005886">
    <property type="term" value="C:plasma membrane"/>
    <property type="evidence" value="ECO:0000266"/>
    <property type="project" value="MGI"/>
</dbReference>
<dbReference type="GO" id="GO:0044325">
    <property type="term" value="F:transmembrane transporter binding"/>
    <property type="evidence" value="ECO:0000266"/>
    <property type="project" value="MGI"/>
</dbReference>
<dbReference type="GO" id="GO:0002244">
    <property type="term" value="P:hematopoietic progenitor cell differentiation"/>
    <property type="evidence" value="ECO:0000316"/>
    <property type="project" value="MGI"/>
</dbReference>
<dbReference type="FunFam" id="1.10.390.30:FF:000001">
    <property type="entry name" value="TRPM8 channel-associated factor 1"/>
    <property type="match status" value="1"/>
</dbReference>
<dbReference type="FunFam" id="3.40.390.80:FF:000001">
    <property type="entry name" value="TRPM8 channel-associated factor 1"/>
    <property type="match status" value="1"/>
</dbReference>
<dbReference type="Gene3D" id="3.40.390.80">
    <property type="entry name" value="Peptidase M60, enhancin-like domain 2"/>
    <property type="match status" value="1"/>
</dbReference>
<dbReference type="Gene3D" id="1.10.390.30">
    <property type="entry name" value="Peptidase M60, enhancin-like domain 3"/>
    <property type="match status" value="1"/>
</dbReference>
<dbReference type="InterPro" id="IPR029062">
    <property type="entry name" value="Class_I_gatase-like"/>
</dbReference>
<dbReference type="InterPro" id="IPR035423">
    <property type="entry name" value="M60-like_N"/>
</dbReference>
<dbReference type="InterPro" id="IPR042279">
    <property type="entry name" value="Pep_M60_3"/>
</dbReference>
<dbReference type="InterPro" id="IPR031161">
    <property type="entry name" value="Peptidase_M60_dom"/>
</dbReference>
<dbReference type="InterPro" id="IPR051244">
    <property type="entry name" value="TCAF"/>
</dbReference>
<dbReference type="PANTHER" id="PTHR15730">
    <property type="entry name" value="EXPERIMENTAL AUTOIMMUNE PROSTATITIS ANTIGEN 2-RELATED"/>
    <property type="match status" value="1"/>
</dbReference>
<dbReference type="PANTHER" id="PTHR15730:SF4">
    <property type="entry name" value="TRPM8 CHANNEL-ASSOCIATED FACTOR 2"/>
    <property type="match status" value="1"/>
</dbReference>
<dbReference type="Pfam" id="PF17291">
    <property type="entry name" value="M60-like_N"/>
    <property type="match status" value="1"/>
</dbReference>
<dbReference type="Pfam" id="PF13402">
    <property type="entry name" value="Peptidase_M60"/>
    <property type="match status" value="1"/>
</dbReference>
<dbReference type="SMART" id="SM01276">
    <property type="entry name" value="M60-like"/>
    <property type="match status" value="1"/>
</dbReference>
<dbReference type="SUPFAM" id="SSF52317">
    <property type="entry name" value="Class I glutamine amidotransferase-like"/>
    <property type="match status" value="1"/>
</dbReference>
<dbReference type="PROSITE" id="PS51723">
    <property type="entry name" value="PEPTIDASE_M60"/>
    <property type="match status" value="1"/>
</dbReference>
<gene>
    <name evidence="1 4" type="primary">Tcaf2</name>
    <name type="synonym">Fam115c</name>
    <name type="synonym">Fam139a</name>
</gene>
<evidence type="ECO:0000250" key="1">
    <source>
        <dbReference type="UniProtKB" id="A6NFQ2"/>
    </source>
</evidence>
<evidence type="ECO:0000255" key="2">
    <source>
        <dbReference type="PROSITE-ProRule" id="PRU01060"/>
    </source>
</evidence>
<evidence type="ECO:0000305" key="3"/>
<evidence type="ECO:0000312" key="4">
    <source>
        <dbReference type="MGI" id="MGI:2385258"/>
    </source>
</evidence>
<comment type="function">
    <text evidence="1">Negatively regulates the plasma membrane cation channel TRPM8 activity. Involved in the recruitment of TRPM8 to the cell surface. Promotes prostate cancer cell migration stimulation in a TRPM8-dependent manner.</text>
</comment>
<comment type="subunit">
    <text evidence="1">Interacts with TRPM8 (via N-terminus and C-terminus domains); the interaction inhibits TRPM8 channel activity. Interacts with TRPV6.</text>
</comment>
<comment type="subcellular location">
    <subcellularLocation>
        <location evidence="1">Cell membrane</location>
    </subcellularLocation>
    <text evidence="1">Colocalizes with TRPM8 on the plasma membrane.</text>
</comment>
<comment type="similarity">
    <text evidence="3">Belongs to the TCAF family.</text>
</comment>
<comment type="sequence caution" evidence="3">
    <conflict type="erroneous initiation">
        <sequence resource="EMBL-CDS" id="BAD21419"/>
    </conflict>
</comment>
<keyword id="KW-1003">Cell membrane</keyword>
<keyword id="KW-0472">Membrane</keyword>
<keyword id="KW-1185">Reference proteome</keyword>
<keyword id="KW-0813">Transport</keyword>
<protein>
    <recommendedName>
        <fullName evidence="1">TRPM8 channel-associated factor 2</fullName>
    </recommendedName>
    <alternativeName>
        <fullName evidence="1">TRP channel-associated factor 2</fullName>
    </alternativeName>
</protein>
<organism>
    <name type="scientific">Mus musculus</name>
    <name type="common">Mouse</name>
    <dbReference type="NCBI Taxonomy" id="10090"/>
    <lineage>
        <taxon>Eukaryota</taxon>
        <taxon>Metazoa</taxon>
        <taxon>Chordata</taxon>
        <taxon>Craniata</taxon>
        <taxon>Vertebrata</taxon>
        <taxon>Euteleostomi</taxon>
        <taxon>Mammalia</taxon>
        <taxon>Eutheria</taxon>
        <taxon>Euarchontoglires</taxon>
        <taxon>Glires</taxon>
        <taxon>Rodentia</taxon>
        <taxon>Myomorpha</taxon>
        <taxon>Muroidea</taxon>
        <taxon>Muridae</taxon>
        <taxon>Murinae</taxon>
        <taxon>Mus</taxon>
        <taxon>Mus</taxon>
    </lineage>
</organism>
<accession>Q921K8</accession>
<accession>Q6KAN8</accession>
<accession>Q922C4</accession>
<proteinExistence type="evidence at protein level"/>
<reference key="1">
    <citation type="journal article" date="2004" name="DNA Res.">
        <title>Prediction of the coding sequences of mouse homologues of FLJ genes: the complete nucleotide sequences of 110 mouse FLJ-homologous cDNAs identified by screening of terminal sequences of cDNA clones randomly sampled from size-fractionated libraries.</title>
        <authorList>
            <person name="Okazaki N."/>
            <person name="Kikuno R."/>
            <person name="Ohara R."/>
            <person name="Inamoto S."/>
            <person name="Koseki H."/>
            <person name="Hiraoka S."/>
            <person name="Saga Y."/>
            <person name="Kitamura H."/>
            <person name="Nakagawa T."/>
            <person name="Nagase T."/>
            <person name="Ohara O."/>
            <person name="Koga H."/>
        </authorList>
    </citation>
    <scope>NUCLEOTIDE SEQUENCE [LARGE SCALE MRNA]</scope>
</reference>
<reference key="2">
    <citation type="journal article" date="2004" name="Genome Res.">
        <title>The status, quality, and expansion of the NIH full-length cDNA project: the Mammalian Gene Collection (MGC).</title>
        <authorList>
            <consortium name="The MGC Project Team"/>
        </authorList>
    </citation>
    <scope>NUCLEOTIDE SEQUENCE [LARGE SCALE MRNA]</scope>
    <source>
        <strain>Czech II</strain>
        <strain>FVB/N</strain>
        <tissue>Mammary tumor</tissue>
    </source>
</reference>
<reference key="3">
    <citation type="journal article" date="2010" name="Cell">
        <title>A tissue-specific atlas of mouse protein phosphorylation and expression.</title>
        <authorList>
            <person name="Huttlin E.L."/>
            <person name="Jedrychowski M.P."/>
            <person name="Elias J.E."/>
            <person name="Goswami T."/>
            <person name="Rad R."/>
            <person name="Beausoleil S.A."/>
            <person name="Villen J."/>
            <person name="Haas W."/>
            <person name="Sowa M.E."/>
            <person name="Gygi S.P."/>
        </authorList>
    </citation>
    <scope>IDENTIFICATION BY MASS SPECTROMETRY [LARGE SCALE ANALYSIS]</scope>
    <source>
        <tissue>Brown adipose tissue</tissue>
        <tissue>Lung</tissue>
        <tissue>Spleen</tissue>
    </source>
</reference>
<feature type="chain" id="PRO_0000320188" description="TRPM8 channel-associated factor 2">
    <location>
        <begin position="1"/>
        <end position="919"/>
    </location>
</feature>
<feature type="domain" description="Peptidase M60" evidence="2">
    <location>
        <begin position="543"/>
        <end position="842"/>
    </location>
</feature>
<feature type="sequence conflict" description="In Ref. 2; AAH08555." evidence="3" ref="2">
    <original>V</original>
    <variation>M</variation>
    <location>
        <position position="16"/>
    </location>
</feature>
<feature type="sequence conflict" description="In Ref. 2; AAH08555." evidence="3" ref="2">
    <original>A</original>
    <variation>V</variation>
    <location>
        <position position="36"/>
    </location>
</feature>
<feature type="sequence conflict" description="In Ref. 2; AAH08555." evidence="3" ref="2">
    <original>T</original>
    <variation>A</variation>
    <location>
        <position position="91"/>
    </location>
</feature>
<feature type="sequence conflict" description="In Ref. 2; AAH08555." evidence="3" ref="2">
    <original>K</original>
    <variation>E</variation>
    <location>
        <position position="137"/>
    </location>
</feature>
<feature type="sequence conflict" description="In Ref. 2; AAH08555." evidence="3" ref="2">
    <original>A</original>
    <variation>T</variation>
    <location>
        <position position="280"/>
    </location>
</feature>
<feature type="sequence conflict" description="In Ref. 2; AAH08555." evidence="3" ref="2">
    <original>A</original>
    <variation>T</variation>
    <location>
        <position position="453"/>
    </location>
</feature>